<name>DPO3_STAAS</name>
<sequence>MAMTEQQKFKVLADQIKISNQLDAEILNSGELTRIDVSNKNRTWEFHITLPQFLAHEDYLLFINAIEQEFKDIANVTCRFTVTNGTNQDEHAIKYFGHCIDQTALSPKVKGQLKQKKLIMSGKVLKVMVSNDIERNHFDKACNGSLIKAFRNCGFDIDKIIFETNDNDQEQNLASLEAHIQEEDEQSARLATEKLEKMKAEKAKQQDNNESAVDKCQIGKPIQIENIKPIESIIEEEFKVAIEGVIFDINLKELKSGRHIVEIKVTDYTDSLVLKMFTRKNKDDLEHFKALSVGKWVRAQGRIEEDTFIRDLVMMMSDIEEIKKATKKDKAEEKRVEFHLHTAMSQMDGIPNIGAYVKQAADWGHPAIAVTDHNVVQAFPDAHAAAEKHGIKMIYGMEGMLVDDGVPIAYKPQDVVLKDATYVVFDVETTGLSNQYDKIIELAAVKVHNGEIIDKFERFSNPHERLSETIINLTHITDDMLVDAPEIEEVLTEFKEWVGDAIFVAHNASFDMGFIDTGYERLGFGPSTNGVIDTLELSRTINTEYGKHGLNFLAKKYGVELTQHHRAIYDTEATAYIFIKMVQQMKELGVLNHNEINKKLSNEDAYKRARPSHVTLIVQNQQGLKNLFKIVSASLVKYFYRTPRIPRSLLDEYREGLLVGTACDEGELFTAVMQKDQSQVEKIAKYYDFIEIQPPALYQDLIDRELIRDTETLHEIYQRLIHAGDTAGIPVIATGNAHYLFEHDGIARKILIASQPGNPLNRSTLPEAHFRTTDEMLNEFHFLGEEKAHEIVVKNTNELADRIERVVPIKDELYTPRMEGANEEIRELSYANARKLYGEDLPQIVIDRLEKELKSIIGNGFAVIYLISQRLVKKSLDDGYLVGSRGSVGSSFVATMTEITEVNPLPPHYICPNCKTSEFFNDGSVGSGFDLPDKTCETCGAPLIKEGQDIPFETFLGFKGDKVPDIDLNFSGEYQPNAHNYTKVLFGEDKVFRAGTIGTVAEKTAFGYVKGYLNDQGIHKRGAEIDRLVKGCTGVKRTTGQHPGGIIVVPDYMDIYDFTPIQYPADDQNSAWMTTHFDFHSIHDNVLKLDILGHDDPTMIRMLQDLSGIDPKTIPVDDKEVMQIFSTPESLGVTEDEILCKTGTFGVPEFGTGFVRQMLEDTKPTTFSELVQISGLSHGTDVWLGNAQELIKTGICDLSSVIGCRDDIMVYLMYAGLEPSMAFKIMESVRKGKGLTEEMIETMKENEVPDWYLDSCLKIKYMFPKAHAAAYVLMAVRIAYFKVHHPLYYYASYFTIRASDFDLITMIKDKTSIRNTVKDMYSRYMDLGKKEKDVLTVLEIMNEMAHRGYRMQPISLEKSQAFEFIIEGDTLIPPFISVPGLGENVAKRIVEARDDGPFLSKEDLNKKAGLSQKIIEYLDELGSLPNLPDKAQLSIFDM</sequence>
<dbReference type="EC" id="2.7.7.7" evidence="1"/>
<dbReference type="EMBL" id="BX571857">
    <property type="protein sequence ID" value="CAG42975.1"/>
    <property type="molecule type" value="Genomic_DNA"/>
</dbReference>
<dbReference type="SMR" id="Q6G9U9"/>
<dbReference type="KEGG" id="sas:SAS1198"/>
<dbReference type="HOGENOM" id="CLU_003297_2_0_9"/>
<dbReference type="GO" id="GO:0005737">
    <property type="term" value="C:cytoplasm"/>
    <property type="evidence" value="ECO:0007669"/>
    <property type="project" value="UniProtKB-SubCell"/>
</dbReference>
<dbReference type="GO" id="GO:0008408">
    <property type="term" value="F:3'-5' exonuclease activity"/>
    <property type="evidence" value="ECO:0007669"/>
    <property type="project" value="UniProtKB-UniRule"/>
</dbReference>
<dbReference type="GO" id="GO:0003677">
    <property type="term" value="F:DNA binding"/>
    <property type="evidence" value="ECO:0007669"/>
    <property type="project" value="UniProtKB-UniRule"/>
</dbReference>
<dbReference type="GO" id="GO:0003887">
    <property type="term" value="F:DNA-directed DNA polymerase activity"/>
    <property type="evidence" value="ECO:0007669"/>
    <property type="project" value="UniProtKB-UniRule"/>
</dbReference>
<dbReference type="GO" id="GO:0006261">
    <property type="term" value="P:DNA-templated DNA replication"/>
    <property type="evidence" value="ECO:0007669"/>
    <property type="project" value="UniProtKB-UniRule"/>
</dbReference>
<dbReference type="CDD" id="cd06127">
    <property type="entry name" value="DEDDh"/>
    <property type="match status" value="1"/>
</dbReference>
<dbReference type="CDD" id="cd07435">
    <property type="entry name" value="PHP_PolIIIA_POLC"/>
    <property type="match status" value="1"/>
</dbReference>
<dbReference type="CDD" id="cd04484">
    <property type="entry name" value="polC_OBF"/>
    <property type="match status" value="1"/>
</dbReference>
<dbReference type="FunFam" id="3.30.420.10:FF:000045">
    <property type="entry name" value="3'-5' exonuclease DinG"/>
    <property type="match status" value="1"/>
</dbReference>
<dbReference type="Gene3D" id="1.10.150.870">
    <property type="match status" value="1"/>
</dbReference>
<dbReference type="Gene3D" id="3.30.1900.20">
    <property type="match status" value="2"/>
</dbReference>
<dbReference type="Gene3D" id="6.10.140.1510">
    <property type="match status" value="1"/>
</dbReference>
<dbReference type="Gene3D" id="3.20.20.140">
    <property type="entry name" value="Metal-dependent hydrolases"/>
    <property type="match status" value="1"/>
</dbReference>
<dbReference type="Gene3D" id="2.40.50.140">
    <property type="entry name" value="Nucleic acid-binding proteins"/>
    <property type="match status" value="1"/>
</dbReference>
<dbReference type="Gene3D" id="1.10.150.700">
    <property type="entry name" value="PolC, middle finger domain"/>
    <property type="match status" value="1"/>
</dbReference>
<dbReference type="Gene3D" id="3.30.420.10">
    <property type="entry name" value="Ribonuclease H-like superfamily/Ribonuclease H"/>
    <property type="match status" value="1"/>
</dbReference>
<dbReference type="HAMAP" id="MF_00356">
    <property type="entry name" value="DNApol_PolC"/>
    <property type="match status" value="1"/>
</dbReference>
<dbReference type="InterPro" id="IPR011708">
    <property type="entry name" value="DNA_pol3_alpha_NTPase_dom"/>
</dbReference>
<dbReference type="InterPro" id="IPR040982">
    <property type="entry name" value="DNA_pol3_finger"/>
</dbReference>
<dbReference type="InterPro" id="IPR024754">
    <property type="entry name" value="DNA_PolC-like_N_II"/>
</dbReference>
<dbReference type="InterPro" id="IPR028112">
    <property type="entry name" value="DNA_PolC-type_N_I"/>
</dbReference>
<dbReference type="InterPro" id="IPR004805">
    <property type="entry name" value="DnaE2/DnaE/PolC"/>
</dbReference>
<dbReference type="InterPro" id="IPR029460">
    <property type="entry name" value="DNAPol_HHH"/>
</dbReference>
<dbReference type="InterPro" id="IPR006054">
    <property type="entry name" value="DnaQ"/>
</dbReference>
<dbReference type="InterPro" id="IPR013520">
    <property type="entry name" value="Exonuclease_RNaseT/DNA_pol3"/>
</dbReference>
<dbReference type="InterPro" id="IPR012340">
    <property type="entry name" value="NA-bd_OB-fold"/>
</dbReference>
<dbReference type="InterPro" id="IPR004013">
    <property type="entry name" value="PHP_dom"/>
</dbReference>
<dbReference type="InterPro" id="IPR003141">
    <property type="entry name" value="Pol/His_phosphatase_N"/>
</dbReference>
<dbReference type="InterPro" id="IPR006308">
    <property type="entry name" value="Pol_III_a_PolC-type_gram_pos"/>
</dbReference>
<dbReference type="InterPro" id="IPR044923">
    <property type="entry name" value="PolC_middle_finger_sf"/>
</dbReference>
<dbReference type="InterPro" id="IPR012337">
    <property type="entry name" value="RNaseH-like_sf"/>
</dbReference>
<dbReference type="InterPro" id="IPR036397">
    <property type="entry name" value="RNaseH_sf"/>
</dbReference>
<dbReference type="NCBIfam" id="TIGR00573">
    <property type="entry name" value="dnaq"/>
    <property type="match status" value="1"/>
</dbReference>
<dbReference type="NCBIfam" id="TIGR01405">
    <property type="entry name" value="polC_Gram_pos"/>
    <property type="match status" value="1"/>
</dbReference>
<dbReference type="NCBIfam" id="NF001688">
    <property type="entry name" value="PRK00448.1"/>
    <property type="match status" value="1"/>
</dbReference>
<dbReference type="PANTHER" id="PTHR32294:SF5">
    <property type="entry name" value="DNA POLYMERASE III POLC-TYPE"/>
    <property type="match status" value="1"/>
</dbReference>
<dbReference type="PANTHER" id="PTHR32294">
    <property type="entry name" value="DNA POLYMERASE III SUBUNIT ALPHA"/>
    <property type="match status" value="1"/>
</dbReference>
<dbReference type="Pfam" id="PF14480">
    <property type="entry name" value="DNA_pol3_a_NI"/>
    <property type="match status" value="1"/>
</dbReference>
<dbReference type="Pfam" id="PF11490">
    <property type="entry name" value="DNA_pol3_a_NII"/>
    <property type="match status" value="1"/>
</dbReference>
<dbReference type="Pfam" id="PF07733">
    <property type="entry name" value="DNA_pol3_alpha"/>
    <property type="match status" value="2"/>
</dbReference>
<dbReference type="Pfam" id="PF17657">
    <property type="entry name" value="DNA_pol3_finger"/>
    <property type="match status" value="1"/>
</dbReference>
<dbReference type="Pfam" id="PF14579">
    <property type="entry name" value="HHH_6"/>
    <property type="match status" value="1"/>
</dbReference>
<dbReference type="Pfam" id="PF02811">
    <property type="entry name" value="PHP"/>
    <property type="match status" value="2"/>
</dbReference>
<dbReference type="Pfam" id="PF00929">
    <property type="entry name" value="RNase_T"/>
    <property type="match status" value="1"/>
</dbReference>
<dbReference type="SMART" id="SM00479">
    <property type="entry name" value="EXOIII"/>
    <property type="match status" value="1"/>
</dbReference>
<dbReference type="SMART" id="SM00481">
    <property type="entry name" value="POLIIIAc"/>
    <property type="match status" value="1"/>
</dbReference>
<dbReference type="SUPFAM" id="SSF81585">
    <property type="entry name" value="PsbU/PolX domain-like"/>
    <property type="match status" value="1"/>
</dbReference>
<dbReference type="SUPFAM" id="SSF53098">
    <property type="entry name" value="Ribonuclease H-like"/>
    <property type="match status" value="1"/>
</dbReference>
<evidence type="ECO:0000255" key="1">
    <source>
        <dbReference type="HAMAP-Rule" id="MF_00356"/>
    </source>
</evidence>
<reference key="1">
    <citation type="journal article" date="2004" name="Proc. Natl. Acad. Sci. U.S.A.">
        <title>Complete genomes of two clinical Staphylococcus aureus strains: evidence for the rapid evolution of virulence and drug resistance.</title>
        <authorList>
            <person name="Holden M.T.G."/>
            <person name="Feil E.J."/>
            <person name="Lindsay J.A."/>
            <person name="Peacock S.J."/>
            <person name="Day N.P.J."/>
            <person name="Enright M.C."/>
            <person name="Foster T.J."/>
            <person name="Moore C.E."/>
            <person name="Hurst L."/>
            <person name="Atkin R."/>
            <person name="Barron A."/>
            <person name="Bason N."/>
            <person name="Bentley S.D."/>
            <person name="Chillingworth C."/>
            <person name="Chillingworth T."/>
            <person name="Churcher C."/>
            <person name="Clark L."/>
            <person name="Corton C."/>
            <person name="Cronin A."/>
            <person name="Doggett J."/>
            <person name="Dowd L."/>
            <person name="Feltwell T."/>
            <person name="Hance Z."/>
            <person name="Harris B."/>
            <person name="Hauser H."/>
            <person name="Holroyd S."/>
            <person name="Jagels K."/>
            <person name="James K.D."/>
            <person name="Lennard N."/>
            <person name="Line A."/>
            <person name="Mayes R."/>
            <person name="Moule S."/>
            <person name="Mungall K."/>
            <person name="Ormond D."/>
            <person name="Quail M.A."/>
            <person name="Rabbinowitsch E."/>
            <person name="Rutherford K.M."/>
            <person name="Sanders M."/>
            <person name="Sharp S."/>
            <person name="Simmonds M."/>
            <person name="Stevens K."/>
            <person name="Whitehead S."/>
            <person name="Barrell B.G."/>
            <person name="Spratt B.G."/>
            <person name="Parkhill J."/>
        </authorList>
    </citation>
    <scope>NUCLEOTIDE SEQUENCE [LARGE SCALE GENOMIC DNA]</scope>
    <source>
        <strain>MSSA476</strain>
    </source>
</reference>
<accession>Q6G9U9</accession>
<keyword id="KW-0963">Cytoplasm</keyword>
<keyword id="KW-0235">DNA replication</keyword>
<keyword id="KW-0239">DNA-directed DNA polymerase</keyword>
<keyword id="KW-0269">Exonuclease</keyword>
<keyword id="KW-0378">Hydrolase</keyword>
<keyword id="KW-0540">Nuclease</keyword>
<keyword id="KW-0548">Nucleotidyltransferase</keyword>
<keyword id="KW-0808">Transferase</keyword>
<organism>
    <name type="scientific">Staphylococcus aureus (strain MSSA476)</name>
    <dbReference type="NCBI Taxonomy" id="282459"/>
    <lineage>
        <taxon>Bacteria</taxon>
        <taxon>Bacillati</taxon>
        <taxon>Bacillota</taxon>
        <taxon>Bacilli</taxon>
        <taxon>Bacillales</taxon>
        <taxon>Staphylococcaceae</taxon>
        <taxon>Staphylococcus</taxon>
    </lineage>
</organism>
<feature type="chain" id="PRO_0000204590" description="DNA polymerase III PolC-type">
    <location>
        <begin position="1"/>
        <end position="1438"/>
    </location>
</feature>
<feature type="domain" description="Exonuclease">
    <location>
        <begin position="422"/>
        <end position="578"/>
    </location>
</feature>
<comment type="function">
    <text evidence="1">Required for replicative DNA synthesis. This DNA polymerase also exhibits 3' to 5' exonuclease activity.</text>
</comment>
<comment type="catalytic activity">
    <reaction evidence="1">
        <text>DNA(n) + a 2'-deoxyribonucleoside 5'-triphosphate = DNA(n+1) + diphosphate</text>
        <dbReference type="Rhea" id="RHEA:22508"/>
        <dbReference type="Rhea" id="RHEA-COMP:17339"/>
        <dbReference type="Rhea" id="RHEA-COMP:17340"/>
        <dbReference type="ChEBI" id="CHEBI:33019"/>
        <dbReference type="ChEBI" id="CHEBI:61560"/>
        <dbReference type="ChEBI" id="CHEBI:173112"/>
        <dbReference type="EC" id="2.7.7.7"/>
    </reaction>
</comment>
<comment type="subcellular location">
    <subcellularLocation>
        <location evidence="1">Cytoplasm</location>
    </subcellularLocation>
</comment>
<comment type="similarity">
    <text evidence="1">Belongs to the DNA polymerase type-C family. PolC subfamily.</text>
</comment>
<protein>
    <recommendedName>
        <fullName evidence="1">DNA polymerase III PolC-type</fullName>
        <shortName evidence="1">PolIII</shortName>
        <ecNumber evidence="1">2.7.7.7</ecNumber>
    </recommendedName>
</protein>
<proteinExistence type="inferred from homology"/>
<gene>
    <name evidence="1" type="primary">polC</name>
    <name type="ordered locus">SAS1198</name>
</gene>